<evidence type="ECO:0000255" key="1">
    <source>
        <dbReference type="HAMAP-Rule" id="MF_00688"/>
    </source>
</evidence>
<gene>
    <name evidence="1" type="primary">aat</name>
    <name type="ordered locus">Shewana3_1756</name>
</gene>
<feature type="chain" id="PRO_0000304359" description="Leucyl/phenylalanyl-tRNA--protein transferase">
    <location>
        <begin position="1"/>
        <end position="236"/>
    </location>
</feature>
<accession>A0KW20</accession>
<reference key="1">
    <citation type="submission" date="2006-09" db="EMBL/GenBank/DDBJ databases">
        <title>Complete sequence of chromosome 1 of Shewanella sp. ANA-3.</title>
        <authorList>
            <person name="Copeland A."/>
            <person name="Lucas S."/>
            <person name="Lapidus A."/>
            <person name="Barry K."/>
            <person name="Detter J.C."/>
            <person name="Glavina del Rio T."/>
            <person name="Hammon N."/>
            <person name="Israni S."/>
            <person name="Dalin E."/>
            <person name="Tice H."/>
            <person name="Pitluck S."/>
            <person name="Chertkov O."/>
            <person name="Brettin T."/>
            <person name="Bruce D."/>
            <person name="Han C."/>
            <person name="Tapia R."/>
            <person name="Gilna P."/>
            <person name="Schmutz J."/>
            <person name="Larimer F."/>
            <person name="Land M."/>
            <person name="Hauser L."/>
            <person name="Kyrpides N."/>
            <person name="Kim E."/>
            <person name="Newman D."/>
            <person name="Salticov C."/>
            <person name="Konstantinidis K."/>
            <person name="Klappenback J."/>
            <person name="Tiedje J."/>
            <person name="Richardson P."/>
        </authorList>
    </citation>
    <scope>NUCLEOTIDE SEQUENCE [LARGE SCALE GENOMIC DNA]</scope>
    <source>
        <strain>ANA-3</strain>
    </source>
</reference>
<organism>
    <name type="scientific">Shewanella sp. (strain ANA-3)</name>
    <dbReference type="NCBI Taxonomy" id="94122"/>
    <lineage>
        <taxon>Bacteria</taxon>
        <taxon>Pseudomonadati</taxon>
        <taxon>Pseudomonadota</taxon>
        <taxon>Gammaproteobacteria</taxon>
        <taxon>Alteromonadales</taxon>
        <taxon>Shewanellaceae</taxon>
        <taxon>Shewanella</taxon>
    </lineage>
</organism>
<protein>
    <recommendedName>
        <fullName evidence="1">Leucyl/phenylalanyl-tRNA--protein transferase</fullName>
        <ecNumber evidence="1">2.3.2.6</ecNumber>
    </recommendedName>
    <alternativeName>
        <fullName evidence="1">L/F-transferase</fullName>
    </alternativeName>
    <alternativeName>
        <fullName evidence="1">Leucyltransferase</fullName>
    </alternativeName>
    <alternativeName>
        <fullName evidence="1">Phenyalanyltransferase</fullName>
    </alternativeName>
</protein>
<sequence length="236" mass="26816">MNSLSFLNHEFEAFPSPELALTDPNGLLAIGGDLRPERLLTAYYHGIFPWFNADDPILWWSPDPRAIFIPGQVNISTSLRKYLKKQPWRFTINHAFTDVMAGCAQPRRKQAGTWITHEIQMAYRELHHNGHAHSVEVWHGERLIGGLYGIAIGQVFCGESMFHRETNASKAAMAVLQQHLIKMNFKLIDAQVMNPHLESLGAKPVKRADFIQLLTQFRDKPVNPAAWIPSEVTLEL</sequence>
<proteinExistence type="inferred from homology"/>
<dbReference type="EC" id="2.3.2.6" evidence="1"/>
<dbReference type="EMBL" id="CP000469">
    <property type="protein sequence ID" value="ABK47989.1"/>
    <property type="molecule type" value="Genomic_DNA"/>
</dbReference>
<dbReference type="RefSeq" id="WP_011716772.1">
    <property type="nucleotide sequence ID" value="NC_008577.1"/>
</dbReference>
<dbReference type="SMR" id="A0KW20"/>
<dbReference type="STRING" id="94122.Shewana3_1756"/>
<dbReference type="KEGG" id="shn:Shewana3_1756"/>
<dbReference type="eggNOG" id="COG2360">
    <property type="taxonomic scope" value="Bacteria"/>
</dbReference>
<dbReference type="HOGENOM" id="CLU_075045_0_0_6"/>
<dbReference type="OrthoDB" id="9790282at2"/>
<dbReference type="Proteomes" id="UP000002589">
    <property type="component" value="Chromosome"/>
</dbReference>
<dbReference type="GO" id="GO:0005737">
    <property type="term" value="C:cytoplasm"/>
    <property type="evidence" value="ECO:0007669"/>
    <property type="project" value="UniProtKB-SubCell"/>
</dbReference>
<dbReference type="GO" id="GO:0008914">
    <property type="term" value="F:leucyl-tRNA--protein transferase activity"/>
    <property type="evidence" value="ECO:0007669"/>
    <property type="project" value="UniProtKB-UniRule"/>
</dbReference>
<dbReference type="GO" id="GO:0030163">
    <property type="term" value="P:protein catabolic process"/>
    <property type="evidence" value="ECO:0007669"/>
    <property type="project" value="UniProtKB-UniRule"/>
</dbReference>
<dbReference type="FunFam" id="3.30.70.3550:FF:000001">
    <property type="entry name" value="Leucyl/phenylalanyl-tRNA--protein transferase"/>
    <property type="match status" value="1"/>
</dbReference>
<dbReference type="FunFam" id="3.40.630.70:FF:000007">
    <property type="entry name" value="Leucyl/phenylalanyl-tRNA--protein transferase"/>
    <property type="match status" value="1"/>
</dbReference>
<dbReference type="Gene3D" id="3.40.630.70">
    <property type="entry name" value="Leucyl/phenylalanyl-tRNA-protein transferase, C-terminal domain"/>
    <property type="match status" value="1"/>
</dbReference>
<dbReference type="Gene3D" id="3.30.70.3550">
    <property type="entry name" value="Leucyl/phenylalanyl-tRNA-protein transferase, N-terminal domain"/>
    <property type="match status" value="1"/>
</dbReference>
<dbReference type="HAMAP" id="MF_00688">
    <property type="entry name" value="Leu_Phe_trans"/>
    <property type="match status" value="1"/>
</dbReference>
<dbReference type="InterPro" id="IPR016181">
    <property type="entry name" value="Acyl_CoA_acyltransferase"/>
</dbReference>
<dbReference type="InterPro" id="IPR004616">
    <property type="entry name" value="Leu/Phe-tRNA_Trfase"/>
</dbReference>
<dbReference type="InterPro" id="IPR042203">
    <property type="entry name" value="Leu/Phe-tRNA_Trfase_C"/>
</dbReference>
<dbReference type="InterPro" id="IPR042221">
    <property type="entry name" value="Leu/Phe-tRNA_Trfase_N"/>
</dbReference>
<dbReference type="NCBIfam" id="TIGR00667">
    <property type="entry name" value="aat"/>
    <property type="match status" value="1"/>
</dbReference>
<dbReference type="PANTHER" id="PTHR30098">
    <property type="entry name" value="LEUCYL/PHENYLALANYL-TRNA--PROTEIN TRANSFERASE"/>
    <property type="match status" value="1"/>
</dbReference>
<dbReference type="PANTHER" id="PTHR30098:SF2">
    <property type="entry name" value="LEUCYL_PHENYLALANYL-TRNA--PROTEIN TRANSFERASE"/>
    <property type="match status" value="1"/>
</dbReference>
<dbReference type="Pfam" id="PF03588">
    <property type="entry name" value="Leu_Phe_trans"/>
    <property type="match status" value="1"/>
</dbReference>
<dbReference type="SUPFAM" id="SSF55729">
    <property type="entry name" value="Acyl-CoA N-acyltransferases (Nat)"/>
    <property type="match status" value="1"/>
</dbReference>
<comment type="function">
    <text evidence="1">Functions in the N-end rule pathway of protein degradation where it conjugates Leu, Phe and, less efficiently, Met from aminoacyl-tRNAs to the N-termini of proteins containing an N-terminal arginine or lysine.</text>
</comment>
<comment type="catalytic activity">
    <reaction evidence="1">
        <text>N-terminal L-lysyl-[protein] + L-leucyl-tRNA(Leu) = N-terminal L-leucyl-L-lysyl-[protein] + tRNA(Leu) + H(+)</text>
        <dbReference type="Rhea" id="RHEA:12340"/>
        <dbReference type="Rhea" id="RHEA-COMP:9613"/>
        <dbReference type="Rhea" id="RHEA-COMP:9622"/>
        <dbReference type="Rhea" id="RHEA-COMP:12670"/>
        <dbReference type="Rhea" id="RHEA-COMP:12671"/>
        <dbReference type="ChEBI" id="CHEBI:15378"/>
        <dbReference type="ChEBI" id="CHEBI:65249"/>
        <dbReference type="ChEBI" id="CHEBI:78442"/>
        <dbReference type="ChEBI" id="CHEBI:78494"/>
        <dbReference type="ChEBI" id="CHEBI:133043"/>
        <dbReference type="EC" id="2.3.2.6"/>
    </reaction>
</comment>
<comment type="catalytic activity">
    <reaction evidence="1">
        <text>N-terminal L-arginyl-[protein] + L-leucyl-tRNA(Leu) = N-terminal L-leucyl-L-arginyl-[protein] + tRNA(Leu) + H(+)</text>
        <dbReference type="Rhea" id="RHEA:50416"/>
        <dbReference type="Rhea" id="RHEA-COMP:9613"/>
        <dbReference type="Rhea" id="RHEA-COMP:9622"/>
        <dbReference type="Rhea" id="RHEA-COMP:12672"/>
        <dbReference type="Rhea" id="RHEA-COMP:12673"/>
        <dbReference type="ChEBI" id="CHEBI:15378"/>
        <dbReference type="ChEBI" id="CHEBI:64719"/>
        <dbReference type="ChEBI" id="CHEBI:78442"/>
        <dbReference type="ChEBI" id="CHEBI:78494"/>
        <dbReference type="ChEBI" id="CHEBI:133044"/>
        <dbReference type="EC" id="2.3.2.6"/>
    </reaction>
</comment>
<comment type="catalytic activity">
    <reaction evidence="1">
        <text>L-phenylalanyl-tRNA(Phe) + an N-terminal L-alpha-aminoacyl-[protein] = an N-terminal L-phenylalanyl-L-alpha-aminoacyl-[protein] + tRNA(Phe)</text>
        <dbReference type="Rhea" id="RHEA:43632"/>
        <dbReference type="Rhea" id="RHEA-COMP:9668"/>
        <dbReference type="Rhea" id="RHEA-COMP:9699"/>
        <dbReference type="Rhea" id="RHEA-COMP:10636"/>
        <dbReference type="Rhea" id="RHEA-COMP:10637"/>
        <dbReference type="ChEBI" id="CHEBI:78442"/>
        <dbReference type="ChEBI" id="CHEBI:78531"/>
        <dbReference type="ChEBI" id="CHEBI:78597"/>
        <dbReference type="ChEBI" id="CHEBI:83561"/>
        <dbReference type="EC" id="2.3.2.6"/>
    </reaction>
</comment>
<comment type="subcellular location">
    <subcellularLocation>
        <location evidence="1">Cytoplasm</location>
    </subcellularLocation>
</comment>
<comment type="similarity">
    <text evidence="1">Belongs to the L/F-transferase family.</text>
</comment>
<keyword id="KW-0012">Acyltransferase</keyword>
<keyword id="KW-0963">Cytoplasm</keyword>
<keyword id="KW-0808">Transferase</keyword>
<name>LFTR_SHESA</name>